<feature type="chain" id="PRO_1000075853" description="Ribonuclease 3">
    <location>
        <begin position="1"/>
        <end position="226"/>
    </location>
</feature>
<feature type="domain" description="RNase III" evidence="1">
    <location>
        <begin position="6"/>
        <end position="128"/>
    </location>
</feature>
<feature type="domain" description="DRBM" evidence="1">
    <location>
        <begin position="155"/>
        <end position="225"/>
    </location>
</feature>
<feature type="active site" evidence="1">
    <location>
        <position position="45"/>
    </location>
</feature>
<feature type="active site" evidence="1">
    <location>
        <position position="117"/>
    </location>
</feature>
<feature type="binding site" evidence="1">
    <location>
        <position position="41"/>
    </location>
    <ligand>
        <name>Mg(2+)</name>
        <dbReference type="ChEBI" id="CHEBI:18420"/>
    </ligand>
</feature>
<feature type="binding site" evidence="1">
    <location>
        <position position="114"/>
    </location>
    <ligand>
        <name>Mg(2+)</name>
        <dbReference type="ChEBI" id="CHEBI:18420"/>
    </ligand>
</feature>
<feature type="binding site" evidence="1">
    <location>
        <position position="117"/>
    </location>
    <ligand>
        <name>Mg(2+)</name>
        <dbReference type="ChEBI" id="CHEBI:18420"/>
    </ligand>
</feature>
<keyword id="KW-0963">Cytoplasm</keyword>
<keyword id="KW-0255">Endonuclease</keyword>
<keyword id="KW-0378">Hydrolase</keyword>
<keyword id="KW-0460">Magnesium</keyword>
<keyword id="KW-0479">Metal-binding</keyword>
<keyword id="KW-0507">mRNA processing</keyword>
<keyword id="KW-0540">Nuclease</keyword>
<keyword id="KW-0694">RNA-binding</keyword>
<keyword id="KW-0698">rRNA processing</keyword>
<keyword id="KW-0699">rRNA-binding</keyword>
<keyword id="KW-0819">tRNA processing</keyword>
<dbReference type="EC" id="3.1.26.3" evidence="1"/>
<dbReference type="EMBL" id="CP000305">
    <property type="protein sequence ID" value="ABG17536.1"/>
    <property type="molecule type" value="Genomic_DNA"/>
</dbReference>
<dbReference type="EMBL" id="ACNQ01000008">
    <property type="protein sequence ID" value="EEO77642.1"/>
    <property type="molecule type" value="Genomic_DNA"/>
</dbReference>
<dbReference type="RefSeq" id="WP_002209679.1">
    <property type="nucleotide sequence ID" value="NZ_ACNQ01000008.1"/>
</dbReference>
<dbReference type="SMR" id="Q1CKE4"/>
<dbReference type="GeneID" id="57975973"/>
<dbReference type="KEGG" id="ypn:YPN_1206"/>
<dbReference type="HOGENOM" id="CLU_000907_1_1_6"/>
<dbReference type="Proteomes" id="UP000008936">
    <property type="component" value="Chromosome"/>
</dbReference>
<dbReference type="GO" id="GO:0005737">
    <property type="term" value="C:cytoplasm"/>
    <property type="evidence" value="ECO:0007669"/>
    <property type="project" value="UniProtKB-SubCell"/>
</dbReference>
<dbReference type="GO" id="GO:0003725">
    <property type="term" value="F:double-stranded RNA binding"/>
    <property type="evidence" value="ECO:0007669"/>
    <property type="project" value="TreeGrafter"/>
</dbReference>
<dbReference type="GO" id="GO:0046872">
    <property type="term" value="F:metal ion binding"/>
    <property type="evidence" value="ECO:0007669"/>
    <property type="project" value="UniProtKB-KW"/>
</dbReference>
<dbReference type="GO" id="GO:0004525">
    <property type="term" value="F:ribonuclease III activity"/>
    <property type="evidence" value="ECO:0007669"/>
    <property type="project" value="UniProtKB-UniRule"/>
</dbReference>
<dbReference type="GO" id="GO:0019843">
    <property type="term" value="F:rRNA binding"/>
    <property type="evidence" value="ECO:0007669"/>
    <property type="project" value="UniProtKB-KW"/>
</dbReference>
<dbReference type="GO" id="GO:0006397">
    <property type="term" value="P:mRNA processing"/>
    <property type="evidence" value="ECO:0007669"/>
    <property type="project" value="UniProtKB-UniRule"/>
</dbReference>
<dbReference type="GO" id="GO:0010468">
    <property type="term" value="P:regulation of gene expression"/>
    <property type="evidence" value="ECO:0007669"/>
    <property type="project" value="TreeGrafter"/>
</dbReference>
<dbReference type="GO" id="GO:0006364">
    <property type="term" value="P:rRNA processing"/>
    <property type="evidence" value="ECO:0007669"/>
    <property type="project" value="UniProtKB-UniRule"/>
</dbReference>
<dbReference type="GO" id="GO:0008033">
    <property type="term" value="P:tRNA processing"/>
    <property type="evidence" value="ECO:0007669"/>
    <property type="project" value="UniProtKB-KW"/>
</dbReference>
<dbReference type="CDD" id="cd10845">
    <property type="entry name" value="DSRM_RNAse_III_family"/>
    <property type="match status" value="1"/>
</dbReference>
<dbReference type="CDD" id="cd00593">
    <property type="entry name" value="RIBOc"/>
    <property type="match status" value="1"/>
</dbReference>
<dbReference type="FunFam" id="1.10.1520.10:FF:000001">
    <property type="entry name" value="Ribonuclease 3"/>
    <property type="match status" value="1"/>
</dbReference>
<dbReference type="FunFam" id="3.30.160.20:FF:000003">
    <property type="entry name" value="Ribonuclease 3"/>
    <property type="match status" value="1"/>
</dbReference>
<dbReference type="Gene3D" id="3.30.160.20">
    <property type="match status" value="1"/>
</dbReference>
<dbReference type="Gene3D" id="1.10.1520.10">
    <property type="entry name" value="Ribonuclease III domain"/>
    <property type="match status" value="1"/>
</dbReference>
<dbReference type="HAMAP" id="MF_00104">
    <property type="entry name" value="RNase_III"/>
    <property type="match status" value="1"/>
</dbReference>
<dbReference type="InterPro" id="IPR014720">
    <property type="entry name" value="dsRBD_dom"/>
</dbReference>
<dbReference type="InterPro" id="IPR011907">
    <property type="entry name" value="RNase_III"/>
</dbReference>
<dbReference type="InterPro" id="IPR000999">
    <property type="entry name" value="RNase_III_dom"/>
</dbReference>
<dbReference type="InterPro" id="IPR036389">
    <property type="entry name" value="RNase_III_sf"/>
</dbReference>
<dbReference type="NCBIfam" id="TIGR02191">
    <property type="entry name" value="RNaseIII"/>
    <property type="match status" value="1"/>
</dbReference>
<dbReference type="PANTHER" id="PTHR11207:SF0">
    <property type="entry name" value="RIBONUCLEASE 3"/>
    <property type="match status" value="1"/>
</dbReference>
<dbReference type="PANTHER" id="PTHR11207">
    <property type="entry name" value="RIBONUCLEASE III"/>
    <property type="match status" value="1"/>
</dbReference>
<dbReference type="Pfam" id="PF00035">
    <property type="entry name" value="dsrm"/>
    <property type="match status" value="1"/>
</dbReference>
<dbReference type="Pfam" id="PF14622">
    <property type="entry name" value="Ribonucleas_3_3"/>
    <property type="match status" value="1"/>
</dbReference>
<dbReference type="SMART" id="SM00358">
    <property type="entry name" value="DSRM"/>
    <property type="match status" value="1"/>
</dbReference>
<dbReference type="SMART" id="SM00535">
    <property type="entry name" value="RIBOc"/>
    <property type="match status" value="1"/>
</dbReference>
<dbReference type="SUPFAM" id="SSF54768">
    <property type="entry name" value="dsRNA-binding domain-like"/>
    <property type="match status" value="1"/>
</dbReference>
<dbReference type="SUPFAM" id="SSF69065">
    <property type="entry name" value="RNase III domain-like"/>
    <property type="match status" value="1"/>
</dbReference>
<dbReference type="PROSITE" id="PS50137">
    <property type="entry name" value="DS_RBD"/>
    <property type="match status" value="1"/>
</dbReference>
<dbReference type="PROSITE" id="PS00517">
    <property type="entry name" value="RNASE_3_1"/>
    <property type="match status" value="1"/>
</dbReference>
<dbReference type="PROSITE" id="PS50142">
    <property type="entry name" value="RNASE_3_2"/>
    <property type="match status" value="1"/>
</dbReference>
<name>RNC_YERPN</name>
<evidence type="ECO:0000255" key="1">
    <source>
        <dbReference type="HAMAP-Rule" id="MF_00104"/>
    </source>
</evidence>
<reference key="1">
    <citation type="journal article" date="2006" name="J. Bacteriol.">
        <title>Complete genome sequence of Yersinia pestis strains Antiqua and Nepal516: evidence of gene reduction in an emerging pathogen.</title>
        <authorList>
            <person name="Chain P.S.G."/>
            <person name="Hu P."/>
            <person name="Malfatti S.A."/>
            <person name="Radnedge L."/>
            <person name="Larimer F."/>
            <person name="Vergez L.M."/>
            <person name="Worsham P."/>
            <person name="Chu M.C."/>
            <person name="Andersen G.L."/>
        </authorList>
    </citation>
    <scope>NUCLEOTIDE SEQUENCE [LARGE SCALE GENOMIC DNA]</scope>
    <source>
        <strain>Nepal516</strain>
    </source>
</reference>
<reference key="2">
    <citation type="submission" date="2009-04" db="EMBL/GenBank/DDBJ databases">
        <title>Yersinia pestis Nepal516A whole genome shotgun sequencing project.</title>
        <authorList>
            <person name="Plunkett G. III"/>
            <person name="Anderson B.D."/>
            <person name="Baumler D.J."/>
            <person name="Burland V."/>
            <person name="Cabot E.L."/>
            <person name="Glasner J.D."/>
            <person name="Mau B."/>
            <person name="Neeno-Eckwall E."/>
            <person name="Perna N.T."/>
            <person name="Munk A.C."/>
            <person name="Tapia R."/>
            <person name="Green L.D."/>
            <person name="Rogers Y.C."/>
            <person name="Detter J.C."/>
            <person name="Bruce D.C."/>
            <person name="Brettin T.S."/>
        </authorList>
    </citation>
    <scope>NUCLEOTIDE SEQUENCE [LARGE SCALE GENOMIC DNA]</scope>
    <source>
        <strain>Nepal516</strain>
    </source>
</reference>
<protein>
    <recommendedName>
        <fullName evidence="1">Ribonuclease 3</fullName>
        <ecNumber evidence="1">3.1.26.3</ecNumber>
    </recommendedName>
    <alternativeName>
        <fullName evidence="1">Ribonuclease III</fullName>
        <shortName evidence="1">RNase III</shortName>
    </alternativeName>
</protein>
<comment type="function">
    <text evidence="1">Digests double-stranded RNA. Involved in the processing of primary rRNA transcript to yield the immediate precursors to the large and small rRNAs (23S and 16S). Processes some mRNAs, and tRNAs when they are encoded in the rRNA operon. Processes pre-crRNA and tracrRNA of type II CRISPR loci if present in the organism.</text>
</comment>
<comment type="catalytic activity">
    <reaction evidence="1">
        <text>Endonucleolytic cleavage to 5'-phosphomonoester.</text>
        <dbReference type="EC" id="3.1.26.3"/>
    </reaction>
</comment>
<comment type="cofactor">
    <cofactor evidence="1">
        <name>Mg(2+)</name>
        <dbReference type="ChEBI" id="CHEBI:18420"/>
    </cofactor>
</comment>
<comment type="subunit">
    <text evidence="1">Homodimer.</text>
</comment>
<comment type="subcellular location">
    <subcellularLocation>
        <location evidence="1">Cytoplasm</location>
    </subcellularLocation>
</comment>
<comment type="similarity">
    <text evidence="1">Belongs to the ribonuclease III family.</text>
</comment>
<sequence>MNPIVINRLQRKLGYTFQQQELLLQALTHRSASSKHNERLEFLGDSILSFVIANELYRRFPRVDEGDMSRMRATLVRGNTLAEMAREFDLGECLRLGPGELKSGGFRRESILADTVEALIGGVFLDSDIHTIERLILEWYHSRLEEISPGDKQKDPKTRLQEYLQGRHLPLPSYLVVQVRGEAHDQEFTIHCQVSGLNEPVIGTGSSRRKAEQAAAEQALKQLELE</sequence>
<organism>
    <name type="scientific">Yersinia pestis bv. Antiqua (strain Nepal516)</name>
    <dbReference type="NCBI Taxonomy" id="377628"/>
    <lineage>
        <taxon>Bacteria</taxon>
        <taxon>Pseudomonadati</taxon>
        <taxon>Pseudomonadota</taxon>
        <taxon>Gammaproteobacteria</taxon>
        <taxon>Enterobacterales</taxon>
        <taxon>Yersiniaceae</taxon>
        <taxon>Yersinia</taxon>
    </lineage>
</organism>
<proteinExistence type="inferred from homology"/>
<accession>Q1CKE4</accession>
<accession>C4GRF1</accession>
<gene>
    <name evidence="1" type="primary">rnc</name>
    <name type="ordered locus">YPN_1206</name>
    <name type="ORF">YP516_1319</name>
</gene>